<reference key="1">
    <citation type="journal article" date="2001" name="Virology">
        <title>Analysis of the first complete DNA sequence of an invertebrate iridovirus: coding strategy of the genome of Chilo iridescent virus.</title>
        <authorList>
            <person name="Jakob N.J."/>
            <person name="Mueller K."/>
            <person name="Bahr U."/>
            <person name="Darai G."/>
        </authorList>
    </citation>
    <scope>NUCLEOTIDE SEQUENCE [LARGE SCALE GENOMIC DNA]</scope>
</reference>
<reference key="2">
    <citation type="journal article" date="2007" name="Virol. J.">
        <title>Comparative genomic analysis of the family Iridoviridae: re-annotating and defining the core set of iridovirus genes.</title>
        <authorList>
            <person name="Eaton H.E."/>
            <person name="Metcalf J."/>
            <person name="Penny E."/>
            <person name="Tcherepanov V."/>
            <person name="Upton C."/>
            <person name="Brunetti C.R."/>
        </authorList>
    </citation>
    <scope>GENOME REANNOTATION</scope>
</reference>
<name>VF224_IIV6</name>
<gene>
    <name type="ORF">IIV6-224L</name>
</gene>
<accession>Q91FU7</accession>
<protein>
    <recommendedName>
        <fullName>Probable cysteine proteinase 224L</fullName>
        <ecNumber evidence="3">3.4.22.-</ecNumber>
    </recommendedName>
</protein>
<keyword id="KW-0378">Hydrolase</keyword>
<keyword id="KW-0472">Membrane</keyword>
<keyword id="KW-0645">Protease</keyword>
<keyword id="KW-1185">Reference proteome</keyword>
<keyword id="KW-0788">Thiol protease</keyword>
<keyword id="KW-0812">Transmembrane</keyword>
<keyword id="KW-1133">Transmembrane helix</keyword>
<organismHost>
    <name type="scientific">Acheta domesticus</name>
    <name type="common">House cricket</name>
    <dbReference type="NCBI Taxonomy" id="6997"/>
</organismHost>
<organismHost>
    <name type="scientific">Chilo suppressalis</name>
    <name type="common">Asiatic rice borer moth</name>
    <dbReference type="NCBI Taxonomy" id="168631"/>
</organismHost>
<organismHost>
    <name type="scientific">Gryllus bimaculatus</name>
    <name type="common">Two-spotted cricket</name>
    <dbReference type="NCBI Taxonomy" id="6999"/>
</organismHost>
<organismHost>
    <name type="scientific">Gryllus campestris</name>
    <dbReference type="NCBI Taxonomy" id="58607"/>
</organismHost>
<organismHost>
    <name type="scientific">Spodoptera frugiperda</name>
    <name type="common">Fall armyworm</name>
    <dbReference type="NCBI Taxonomy" id="7108"/>
</organismHost>
<feature type="chain" id="PRO_0000376964" description="Probable cysteine proteinase 224L">
    <location>
        <begin position="1"/>
        <end position="449"/>
    </location>
</feature>
<feature type="transmembrane region" description="Helical" evidence="1">
    <location>
        <begin position="429"/>
        <end position="449"/>
    </location>
</feature>
<feature type="active site" evidence="2">
    <location>
        <position position="99"/>
    </location>
</feature>
<feature type="active site" evidence="2">
    <location>
        <position position="292"/>
    </location>
</feature>
<feature type="active site" evidence="2">
    <location>
        <position position="322"/>
    </location>
</feature>
<dbReference type="EC" id="3.4.22.-" evidence="3"/>
<dbReference type="EMBL" id="AF303741">
    <property type="protein sequence ID" value="AAK82086.1"/>
    <property type="molecule type" value="Genomic_DNA"/>
</dbReference>
<dbReference type="RefSeq" id="NP_149687.1">
    <property type="nucleotide sequence ID" value="NC_003038.1"/>
</dbReference>
<dbReference type="MEROPS" id="C01.094"/>
<dbReference type="KEGG" id="vg:1733244"/>
<dbReference type="OrthoDB" id="4752at10239"/>
<dbReference type="Proteomes" id="UP000001359">
    <property type="component" value="Genome"/>
</dbReference>
<dbReference type="GO" id="GO:0016020">
    <property type="term" value="C:membrane"/>
    <property type="evidence" value="ECO:0007669"/>
    <property type="project" value="UniProtKB-SubCell"/>
</dbReference>
<dbReference type="GO" id="GO:0008234">
    <property type="term" value="F:cysteine-type peptidase activity"/>
    <property type="evidence" value="ECO:0007669"/>
    <property type="project" value="UniProtKB-KW"/>
</dbReference>
<dbReference type="GO" id="GO:0006508">
    <property type="term" value="P:proteolysis"/>
    <property type="evidence" value="ECO:0007669"/>
    <property type="project" value="UniProtKB-KW"/>
</dbReference>
<dbReference type="Gene3D" id="3.90.70.10">
    <property type="entry name" value="Cysteine proteinases"/>
    <property type="match status" value="1"/>
</dbReference>
<dbReference type="InterPro" id="IPR038765">
    <property type="entry name" value="Papain-like_cys_pep_sf"/>
</dbReference>
<dbReference type="InterPro" id="IPR000169">
    <property type="entry name" value="Pept_cys_AS"/>
</dbReference>
<dbReference type="InterPro" id="IPR013128">
    <property type="entry name" value="Peptidase_C1A"/>
</dbReference>
<dbReference type="InterPro" id="IPR000668">
    <property type="entry name" value="Peptidase_C1A_C"/>
</dbReference>
<dbReference type="PANTHER" id="PTHR12411">
    <property type="entry name" value="CYSTEINE PROTEASE FAMILY C1-RELATED"/>
    <property type="match status" value="1"/>
</dbReference>
<dbReference type="Pfam" id="PF00112">
    <property type="entry name" value="Peptidase_C1"/>
    <property type="match status" value="1"/>
</dbReference>
<dbReference type="SMART" id="SM00645">
    <property type="entry name" value="Pept_C1"/>
    <property type="match status" value="1"/>
</dbReference>
<dbReference type="SUPFAM" id="SSF54001">
    <property type="entry name" value="Cysteine proteinases"/>
    <property type="match status" value="1"/>
</dbReference>
<dbReference type="PROSITE" id="PS00139">
    <property type="entry name" value="THIOL_PROTEASE_CYS"/>
    <property type="match status" value="1"/>
</dbReference>
<organism>
    <name type="scientific">Invertebrate iridescent virus 6</name>
    <name type="common">IIV-6</name>
    <name type="synonym">Chilo iridescent virus</name>
    <dbReference type="NCBI Taxonomy" id="176652"/>
    <lineage>
        <taxon>Viruses</taxon>
        <taxon>Varidnaviria</taxon>
        <taxon>Bamfordvirae</taxon>
        <taxon>Nucleocytoviricota</taxon>
        <taxon>Megaviricetes</taxon>
        <taxon>Pimascovirales</taxon>
        <taxon>Iridoviridae</taxon>
        <taxon>Betairidovirinae</taxon>
        <taxon>Iridovirus</taxon>
    </lineage>
</organism>
<sequence length="449" mass="50789">MKTKNRLLNSDIDFVNESIPYSRSDFNNMLTKLSSNDYYQLMVNTYIGTYGSAKFFGESTKTLPENFNWKTITEFDPPSIVSKKKLISEPENQYLCGNCWAMSTVQTIGDRFVVAGLVNWVPDLSTTFAMLYYPQGQCDGGNSAKLMRQIHTGIGLASKHCIDYSWCSRNIECKTDNSLGHFVSENKSYLLPSKKGCYYNSKHYIYKIDSRPKIISGYGTLNTDNEVLNNQILLKQEILANGPAVGGFLVFENFTSAFTKVNGGVYLENVSNYGSGKPVEFNPHINKYSGNHVVSILGWGVAKGIKISNTQFSDVPYWFCRNTWGKNWGDKGYFKIAMYPFNKKSQFLKLVSIVDHEGHTRRNSGVVICNVSETPILQSLPVIPSTEIPKSLDNSTNFYSQDENYEIKNNSQNEKGFPKGNRRRTTSSDTQIVFIFFLSVVILFIFIIL</sequence>
<comment type="function">
    <text>Probable cysteine protease.</text>
</comment>
<comment type="subcellular location">
    <subcellularLocation>
        <location evidence="3">Membrane</location>
        <topology evidence="3">Single-pass membrane protein</topology>
    </subcellularLocation>
</comment>
<comment type="similarity">
    <text evidence="2">Belongs to the peptidase C1 family.</text>
</comment>
<evidence type="ECO:0000255" key="1"/>
<evidence type="ECO:0000255" key="2">
    <source>
        <dbReference type="PROSITE-ProRule" id="PRU10088"/>
    </source>
</evidence>
<evidence type="ECO:0000305" key="3"/>
<proteinExistence type="inferred from homology"/>